<dbReference type="EC" id="2.7.7.60" evidence="1"/>
<dbReference type="EC" id="4.6.1.12" evidence="1"/>
<dbReference type="EMBL" id="CP000267">
    <property type="protein sequence ID" value="ABD69066.1"/>
    <property type="molecule type" value="Genomic_DNA"/>
</dbReference>
<dbReference type="RefSeq" id="WP_011463634.1">
    <property type="nucleotide sequence ID" value="NC_007908.1"/>
</dbReference>
<dbReference type="SMR" id="Q21YT7"/>
<dbReference type="STRING" id="338969.Rfer_1332"/>
<dbReference type="KEGG" id="rfr:Rfer_1332"/>
<dbReference type="eggNOG" id="COG0245">
    <property type="taxonomic scope" value="Bacteria"/>
</dbReference>
<dbReference type="eggNOG" id="COG1211">
    <property type="taxonomic scope" value="Bacteria"/>
</dbReference>
<dbReference type="HOGENOM" id="CLU_042800_2_5_4"/>
<dbReference type="OrthoDB" id="9806837at2"/>
<dbReference type="UniPathway" id="UPA00056">
    <property type="reaction ID" value="UER00093"/>
</dbReference>
<dbReference type="UniPathway" id="UPA00056">
    <property type="reaction ID" value="UER00095"/>
</dbReference>
<dbReference type="Proteomes" id="UP000008332">
    <property type="component" value="Chromosome"/>
</dbReference>
<dbReference type="GO" id="GO:0008685">
    <property type="term" value="F:2-C-methyl-D-erythritol 2,4-cyclodiphosphate synthase activity"/>
    <property type="evidence" value="ECO:0007669"/>
    <property type="project" value="UniProtKB-UniRule"/>
</dbReference>
<dbReference type="GO" id="GO:0050518">
    <property type="term" value="F:2-C-methyl-D-erythritol 4-phosphate cytidylyltransferase activity"/>
    <property type="evidence" value="ECO:0007669"/>
    <property type="project" value="UniProtKB-UniRule"/>
</dbReference>
<dbReference type="GO" id="GO:0046872">
    <property type="term" value="F:metal ion binding"/>
    <property type="evidence" value="ECO:0007669"/>
    <property type="project" value="UniProtKB-KW"/>
</dbReference>
<dbReference type="GO" id="GO:0019288">
    <property type="term" value="P:isopentenyl diphosphate biosynthetic process, methylerythritol 4-phosphate pathway"/>
    <property type="evidence" value="ECO:0007669"/>
    <property type="project" value="UniProtKB-UniRule"/>
</dbReference>
<dbReference type="GO" id="GO:0016114">
    <property type="term" value="P:terpenoid biosynthetic process"/>
    <property type="evidence" value="ECO:0007669"/>
    <property type="project" value="InterPro"/>
</dbReference>
<dbReference type="CDD" id="cd02516">
    <property type="entry name" value="CDP-ME_synthetase"/>
    <property type="match status" value="1"/>
</dbReference>
<dbReference type="CDD" id="cd00554">
    <property type="entry name" value="MECDP_synthase"/>
    <property type="match status" value="1"/>
</dbReference>
<dbReference type="FunFam" id="3.30.1330.50:FF:000001">
    <property type="entry name" value="2-C-methyl-D-erythritol 2,4-cyclodiphosphate synthase"/>
    <property type="match status" value="1"/>
</dbReference>
<dbReference type="FunFam" id="3.90.550.10:FF:000003">
    <property type="entry name" value="2-C-methyl-D-erythritol 4-phosphate cytidylyltransferase"/>
    <property type="match status" value="1"/>
</dbReference>
<dbReference type="Gene3D" id="3.30.1330.50">
    <property type="entry name" value="2-C-methyl-D-erythritol 2,4-cyclodiphosphate synthase"/>
    <property type="match status" value="1"/>
</dbReference>
<dbReference type="Gene3D" id="3.90.550.10">
    <property type="entry name" value="Spore Coat Polysaccharide Biosynthesis Protein SpsA, Chain A"/>
    <property type="match status" value="1"/>
</dbReference>
<dbReference type="HAMAP" id="MF_00108">
    <property type="entry name" value="IspD"/>
    <property type="match status" value="1"/>
</dbReference>
<dbReference type="HAMAP" id="MF_01520">
    <property type="entry name" value="IspDF"/>
    <property type="match status" value="1"/>
</dbReference>
<dbReference type="HAMAP" id="MF_00107">
    <property type="entry name" value="IspF"/>
    <property type="match status" value="1"/>
</dbReference>
<dbReference type="InterPro" id="IPR001228">
    <property type="entry name" value="IspD"/>
</dbReference>
<dbReference type="InterPro" id="IPR026596">
    <property type="entry name" value="IspD/F"/>
</dbReference>
<dbReference type="InterPro" id="IPR034683">
    <property type="entry name" value="IspD/TarI"/>
</dbReference>
<dbReference type="InterPro" id="IPR018294">
    <property type="entry name" value="ISPD_synthase_CS"/>
</dbReference>
<dbReference type="InterPro" id="IPR003526">
    <property type="entry name" value="MECDP_synthase"/>
</dbReference>
<dbReference type="InterPro" id="IPR020555">
    <property type="entry name" value="MECDP_synthase_CS"/>
</dbReference>
<dbReference type="InterPro" id="IPR036571">
    <property type="entry name" value="MECDP_synthase_sf"/>
</dbReference>
<dbReference type="InterPro" id="IPR029044">
    <property type="entry name" value="Nucleotide-diphossugar_trans"/>
</dbReference>
<dbReference type="NCBIfam" id="TIGR00453">
    <property type="entry name" value="ispD"/>
    <property type="match status" value="1"/>
</dbReference>
<dbReference type="NCBIfam" id="TIGR00151">
    <property type="entry name" value="ispF"/>
    <property type="match status" value="1"/>
</dbReference>
<dbReference type="PANTHER" id="PTHR43181">
    <property type="entry name" value="2-C-METHYL-D-ERYTHRITOL 2,4-CYCLODIPHOSPHATE SYNTHASE, CHLOROPLASTIC"/>
    <property type="match status" value="1"/>
</dbReference>
<dbReference type="PANTHER" id="PTHR43181:SF1">
    <property type="entry name" value="2-C-METHYL-D-ERYTHRITOL 2,4-CYCLODIPHOSPHATE SYNTHASE, CHLOROPLASTIC"/>
    <property type="match status" value="1"/>
</dbReference>
<dbReference type="Pfam" id="PF01128">
    <property type="entry name" value="IspD"/>
    <property type="match status" value="1"/>
</dbReference>
<dbReference type="Pfam" id="PF02542">
    <property type="entry name" value="YgbB"/>
    <property type="match status" value="1"/>
</dbReference>
<dbReference type="SUPFAM" id="SSF69765">
    <property type="entry name" value="IpsF-like"/>
    <property type="match status" value="1"/>
</dbReference>
<dbReference type="SUPFAM" id="SSF53448">
    <property type="entry name" value="Nucleotide-diphospho-sugar transferases"/>
    <property type="match status" value="1"/>
</dbReference>
<dbReference type="PROSITE" id="PS01295">
    <property type="entry name" value="ISPD"/>
    <property type="match status" value="1"/>
</dbReference>
<dbReference type="PROSITE" id="PS01350">
    <property type="entry name" value="ISPF"/>
    <property type="match status" value="1"/>
</dbReference>
<sequence>MADTPALIPQSDTTPRCWALIPCAGTGSRAGATGPKQYQLLAGKPMVLHTLAAFAAVPRIARTLVVVAPDDAFFASQTLTDARFLVAACGGSTRAASVLNGLNFLLGQGAARHDWVLVHDAARCLIRPDQIDQLIDACWQDDVGGLLALPLPDTLKRESLGRVAATLERADKWLAQTPQMFRLGSLLDALQVAGTTVTDESSAMEAMGLSPKLVPGSAQNFKVTYPQDFCLAEAVLMTRSSGDSAPQQSASEFKRASDMNFRIGEGWDIHALVAGRKLLLGGVEIPYHLGLLGHSDADVLLHAITDALLGAAALGDIGTHFPDTDARFKGADSLVLLTEAARRVRAKGFEIGNVDSTVIAQAPKLMPYMAAMRAQIALALALEVDQVNVKAKTAEKMGPVGLGQAMEARATVLLRKFI</sequence>
<organism>
    <name type="scientific">Albidiferax ferrireducens (strain ATCC BAA-621 / DSM 15236 / T118)</name>
    <name type="common">Rhodoferax ferrireducens</name>
    <dbReference type="NCBI Taxonomy" id="338969"/>
    <lineage>
        <taxon>Bacteria</taxon>
        <taxon>Pseudomonadati</taxon>
        <taxon>Pseudomonadota</taxon>
        <taxon>Betaproteobacteria</taxon>
        <taxon>Burkholderiales</taxon>
        <taxon>Comamonadaceae</taxon>
        <taxon>Rhodoferax</taxon>
    </lineage>
</organism>
<reference key="1">
    <citation type="submission" date="2006-02" db="EMBL/GenBank/DDBJ databases">
        <title>Complete sequence of chromosome of Rhodoferax ferrireducens DSM 15236.</title>
        <authorList>
            <person name="Copeland A."/>
            <person name="Lucas S."/>
            <person name="Lapidus A."/>
            <person name="Barry K."/>
            <person name="Detter J.C."/>
            <person name="Glavina del Rio T."/>
            <person name="Hammon N."/>
            <person name="Israni S."/>
            <person name="Pitluck S."/>
            <person name="Brettin T."/>
            <person name="Bruce D."/>
            <person name="Han C."/>
            <person name="Tapia R."/>
            <person name="Gilna P."/>
            <person name="Kiss H."/>
            <person name="Schmutz J."/>
            <person name="Larimer F."/>
            <person name="Land M."/>
            <person name="Kyrpides N."/>
            <person name="Ivanova N."/>
            <person name="Richardson P."/>
        </authorList>
    </citation>
    <scope>NUCLEOTIDE SEQUENCE [LARGE SCALE GENOMIC DNA]</scope>
    <source>
        <strain>ATCC BAA-621 / DSM 15236 / T118</strain>
    </source>
</reference>
<feature type="chain" id="PRO_0000296752" description="Bifunctional enzyme IspD/IspF">
    <location>
        <begin position="1"/>
        <end position="418"/>
    </location>
</feature>
<feature type="region of interest" description="2-C-methyl-D-erythritol 4-phosphate cytidylyltransferase" evidence="1">
    <location>
        <begin position="1"/>
        <end position="261"/>
    </location>
</feature>
<feature type="region of interest" description="2-C-methyl-D-erythritol 2,4-cyclodiphosphate synthase" evidence="1">
    <location>
        <begin position="262"/>
        <end position="418"/>
    </location>
</feature>
<feature type="binding site" evidence="1">
    <location>
        <begin position="268"/>
        <end position="270"/>
    </location>
    <ligand>
        <name>4-CDP-2-C-methyl-D-erythritol 2-phosphate</name>
        <dbReference type="ChEBI" id="CHEBI:57919"/>
    </ligand>
</feature>
<feature type="binding site" evidence="1">
    <location>
        <position position="268"/>
    </location>
    <ligand>
        <name>a divalent metal cation</name>
        <dbReference type="ChEBI" id="CHEBI:60240"/>
    </ligand>
</feature>
<feature type="binding site" evidence="1">
    <location>
        <position position="270"/>
    </location>
    <ligand>
        <name>a divalent metal cation</name>
        <dbReference type="ChEBI" id="CHEBI:60240"/>
    </ligand>
</feature>
<feature type="binding site" evidence="1">
    <location>
        <begin position="294"/>
        <end position="295"/>
    </location>
    <ligand>
        <name>4-CDP-2-C-methyl-D-erythritol 2-phosphate</name>
        <dbReference type="ChEBI" id="CHEBI:57919"/>
    </ligand>
</feature>
<feature type="binding site" evidence="1">
    <location>
        <position position="302"/>
    </location>
    <ligand>
        <name>a divalent metal cation</name>
        <dbReference type="ChEBI" id="CHEBI:60240"/>
    </ligand>
</feature>
<feature type="binding site" evidence="1">
    <location>
        <begin position="316"/>
        <end position="318"/>
    </location>
    <ligand>
        <name>4-CDP-2-C-methyl-D-erythritol 2-phosphate</name>
        <dbReference type="ChEBI" id="CHEBI:57919"/>
    </ligand>
</feature>
<feature type="binding site" evidence="1">
    <location>
        <begin position="321"/>
        <end position="325"/>
    </location>
    <ligand>
        <name>4-CDP-2-C-methyl-D-erythritol 2-phosphate</name>
        <dbReference type="ChEBI" id="CHEBI:57919"/>
    </ligand>
</feature>
<feature type="site" description="Transition state stabilizer" evidence="1">
    <location>
        <position position="29"/>
    </location>
</feature>
<feature type="site" description="Transition state stabilizer" evidence="1">
    <location>
        <position position="36"/>
    </location>
</feature>
<feature type="site" description="Positions MEP for the nucleophilic attack" evidence="1">
    <location>
        <position position="169"/>
    </location>
</feature>
<feature type="site" description="Positions MEP for the nucleophilic attack" evidence="1">
    <location>
        <position position="222"/>
    </location>
</feature>
<feature type="site" description="Transition state stabilizer" evidence="1">
    <location>
        <position position="294"/>
    </location>
</feature>
<feature type="site" description="Transition state stabilizer" evidence="1">
    <location>
        <position position="393"/>
    </location>
</feature>
<accession>Q21YT7</accession>
<keyword id="KW-0414">Isoprene biosynthesis</keyword>
<keyword id="KW-0456">Lyase</keyword>
<keyword id="KW-0479">Metal-binding</keyword>
<keyword id="KW-0511">Multifunctional enzyme</keyword>
<keyword id="KW-0548">Nucleotidyltransferase</keyword>
<keyword id="KW-1185">Reference proteome</keyword>
<keyword id="KW-0808">Transferase</keyword>
<name>ISPDF_ALBFT</name>
<proteinExistence type="inferred from homology"/>
<comment type="function">
    <text evidence="1">Bifunctional enzyme that catalyzes the formation of 4-diphosphocytidyl-2-C-methyl-D-erythritol from CTP and 2-C-methyl-D-erythritol 4-phosphate (MEP) (IspD), and catalyzes the conversion of 4-diphosphocytidyl-2-C-methyl-D-erythritol 2-phosphate (CDP-ME2P) to 2-C-methyl-D-erythritol 2,4-cyclodiphosphate (ME-CPP) with a corresponding release of cytidine 5-monophosphate (CMP) (IspF).</text>
</comment>
<comment type="catalytic activity">
    <reaction evidence="1">
        <text>2-C-methyl-D-erythritol 4-phosphate + CTP + H(+) = 4-CDP-2-C-methyl-D-erythritol + diphosphate</text>
        <dbReference type="Rhea" id="RHEA:13429"/>
        <dbReference type="ChEBI" id="CHEBI:15378"/>
        <dbReference type="ChEBI" id="CHEBI:33019"/>
        <dbReference type="ChEBI" id="CHEBI:37563"/>
        <dbReference type="ChEBI" id="CHEBI:57823"/>
        <dbReference type="ChEBI" id="CHEBI:58262"/>
        <dbReference type="EC" id="2.7.7.60"/>
    </reaction>
</comment>
<comment type="catalytic activity">
    <reaction evidence="1">
        <text>4-CDP-2-C-methyl-D-erythritol 2-phosphate = 2-C-methyl-D-erythritol 2,4-cyclic diphosphate + CMP</text>
        <dbReference type="Rhea" id="RHEA:23864"/>
        <dbReference type="ChEBI" id="CHEBI:57919"/>
        <dbReference type="ChEBI" id="CHEBI:58483"/>
        <dbReference type="ChEBI" id="CHEBI:60377"/>
        <dbReference type="EC" id="4.6.1.12"/>
    </reaction>
</comment>
<comment type="cofactor">
    <cofactor evidence="1">
        <name>a divalent metal cation</name>
        <dbReference type="ChEBI" id="CHEBI:60240"/>
    </cofactor>
</comment>
<comment type="pathway">
    <text evidence="1">Isoprenoid biosynthesis; isopentenyl diphosphate biosynthesis via DXP pathway; isopentenyl diphosphate from 1-deoxy-D-xylulose 5-phosphate: step 2/6.</text>
</comment>
<comment type="pathway">
    <text evidence="1">Isoprenoid biosynthesis; isopentenyl diphosphate biosynthesis via DXP pathway; isopentenyl diphosphate from 1-deoxy-D-xylulose 5-phosphate: step 4/6.</text>
</comment>
<comment type="similarity">
    <text evidence="1">In the N-terminal section; belongs to the IspD/TarI cytidylyltransferase family. IspD subfamily.</text>
</comment>
<comment type="similarity">
    <text evidence="1">In the C-terminal section; belongs to the IspF family.</text>
</comment>
<gene>
    <name evidence="1" type="primary">ispDF</name>
    <name type="ordered locus">Rfer_1332</name>
</gene>
<protein>
    <recommendedName>
        <fullName evidence="1">Bifunctional enzyme IspD/IspF</fullName>
    </recommendedName>
    <domain>
        <recommendedName>
            <fullName evidence="1">2-C-methyl-D-erythritol 4-phosphate cytidylyltransferase</fullName>
            <ecNumber evidence="1">2.7.7.60</ecNumber>
        </recommendedName>
        <alternativeName>
            <fullName evidence="1">4-diphosphocytidyl-2C-methyl-D-erythritol synthase</fullName>
        </alternativeName>
        <alternativeName>
            <fullName evidence="1">MEP cytidylyltransferase</fullName>
            <shortName evidence="1">MCT</shortName>
        </alternativeName>
    </domain>
    <domain>
        <recommendedName>
            <fullName evidence="1">2-C-methyl-D-erythritol 2,4-cyclodiphosphate synthase</fullName>
            <shortName evidence="1">MECDP-synthase</shortName>
            <shortName evidence="1">MECPP-synthase</shortName>
            <shortName evidence="1">MECPS</shortName>
            <ecNumber evidence="1">4.6.1.12</ecNumber>
        </recommendedName>
    </domain>
</protein>
<evidence type="ECO:0000255" key="1">
    <source>
        <dbReference type="HAMAP-Rule" id="MF_01520"/>
    </source>
</evidence>